<feature type="chain" id="PRO_0000142617" description="Hemagglutinin-neuraminidase">
    <location>
        <begin position="1"/>
        <end position="616"/>
    </location>
</feature>
<feature type="topological domain" description="Intravirion" evidence="4">
    <location>
        <begin position="1"/>
        <end position="26"/>
    </location>
</feature>
<feature type="transmembrane region" description="Helical" evidence="4">
    <location>
        <begin position="27"/>
        <end position="47"/>
    </location>
</feature>
<feature type="topological domain" description="Virion surface" evidence="4">
    <location>
        <begin position="48"/>
        <end position="616"/>
    </location>
</feature>
<feature type="region of interest" description="Important for interaction with fusion/F protein" evidence="2">
    <location>
        <begin position="124"/>
        <end position="152"/>
    </location>
</feature>
<feature type="region of interest" description="Involved in neuraminidase activity" evidence="2">
    <location>
        <begin position="234"/>
        <end position="239"/>
    </location>
</feature>
<feature type="glycosylation site" description="N-linked (GlcNAc...) asparagine; by host" evidence="4">
    <location>
        <position position="119"/>
    </location>
</feature>
<feature type="glycosylation site" description="N-linked (GlcNAc...) asparagine; by host" evidence="2">
    <location>
        <position position="341"/>
    </location>
</feature>
<feature type="glycosylation site" description="N-linked (GlcNAc...) asparagine; by host" evidence="2">
    <location>
        <position position="433"/>
    </location>
</feature>
<feature type="glycosylation site" description="N-linked (GlcNAc...) asparagine; by host" evidence="2">
    <location>
        <position position="481"/>
    </location>
</feature>
<feature type="glycosylation site" description="N-linked (GlcNAc...) asparagine; by host" evidence="4">
    <location>
        <position position="538"/>
    </location>
</feature>
<feature type="glycosylation site" description="N-linked (GlcNAc...) asparagine; by host" evidence="4">
    <location>
        <position position="600"/>
    </location>
</feature>
<feature type="disulfide bond" evidence="3">
    <location>
        <begin position="172"/>
        <end position="196"/>
    </location>
</feature>
<feature type="disulfide bond" evidence="3">
    <location>
        <begin position="186"/>
        <end position="247"/>
    </location>
</feature>
<feature type="disulfide bond" evidence="3">
    <location>
        <begin position="238"/>
        <end position="251"/>
    </location>
</feature>
<feature type="disulfide bond" evidence="3">
    <location>
        <begin position="344"/>
        <end position="461"/>
    </location>
</feature>
<feature type="disulfide bond" evidence="3">
    <location>
        <begin position="455"/>
        <end position="465"/>
    </location>
</feature>
<feature type="disulfide bond" evidence="3">
    <location>
        <begin position="531"/>
        <end position="542"/>
    </location>
</feature>
<feature type="sequence variant">
    <original>Q</original>
    <variation>H</variation>
    <location>
        <position position="87"/>
    </location>
</feature>
<feature type="sequence variant">
    <original>R</original>
    <variation>Q</variation>
    <location>
        <position position="113"/>
    </location>
</feature>
<feature type="sequence variant">
    <original>Y</original>
    <variation>F</variation>
    <location>
        <position position="151"/>
    </location>
</feature>
<feature type="sequence variant">
    <original>S</original>
    <variation>G</variation>
    <location>
        <position position="432"/>
    </location>
</feature>
<feature type="sequence variant">
    <original>K</original>
    <variation>E</variation>
    <location>
        <position position="495"/>
    </location>
</feature>
<dbReference type="EC" id="3.2.1.18" evidence="3"/>
<dbReference type="EMBL" id="J03911">
    <property type="protein sequence ID" value="AAA46654.1"/>
    <property type="molecule type" value="Genomic_RNA"/>
</dbReference>
<dbReference type="EMBL" id="M24706">
    <property type="protein sequence ID" value="AAA46656.1"/>
    <property type="molecule type" value="Genomic_RNA"/>
</dbReference>
<dbReference type="PIR" id="A31110">
    <property type="entry name" value="HNNZQD"/>
</dbReference>
<dbReference type="PIR" id="B46328">
    <property type="entry name" value="B46328"/>
</dbReference>
<dbReference type="SMR" id="P13850"/>
<dbReference type="CAZy" id="GH83">
    <property type="family name" value="Glycoside Hydrolase Family 83"/>
</dbReference>
<dbReference type="GlyCosmos" id="P13850">
    <property type="glycosylation" value="6 sites, No reported glycans"/>
</dbReference>
<dbReference type="GO" id="GO:0020002">
    <property type="term" value="C:host cell plasma membrane"/>
    <property type="evidence" value="ECO:0007669"/>
    <property type="project" value="UniProtKB-SubCell"/>
</dbReference>
<dbReference type="GO" id="GO:0016020">
    <property type="term" value="C:membrane"/>
    <property type="evidence" value="ECO:0007669"/>
    <property type="project" value="UniProtKB-KW"/>
</dbReference>
<dbReference type="GO" id="GO:0019031">
    <property type="term" value="C:viral envelope"/>
    <property type="evidence" value="ECO:0007669"/>
    <property type="project" value="UniProtKB-KW"/>
</dbReference>
<dbReference type="GO" id="GO:0055036">
    <property type="term" value="C:virion membrane"/>
    <property type="evidence" value="ECO:0007669"/>
    <property type="project" value="UniProtKB-SubCell"/>
</dbReference>
<dbReference type="GO" id="GO:0004308">
    <property type="term" value="F:exo-alpha-sialidase activity"/>
    <property type="evidence" value="ECO:0007669"/>
    <property type="project" value="UniProtKB-EC"/>
</dbReference>
<dbReference type="GO" id="GO:0046789">
    <property type="term" value="F:host cell surface receptor binding"/>
    <property type="evidence" value="ECO:0007669"/>
    <property type="project" value="InterPro"/>
</dbReference>
<dbReference type="GO" id="GO:0046718">
    <property type="term" value="P:symbiont entry into host cell"/>
    <property type="evidence" value="ECO:0007669"/>
    <property type="project" value="UniProtKB-KW"/>
</dbReference>
<dbReference type="GO" id="GO:0019062">
    <property type="term" value="P:virion attachment to host cell"/>
    <property type="evidence" value="ECO:0007669"/>
    <property type="project" value="UniProtKB-KW"/>
</dbReference>
<dbReference type="CDD" id="cd15469">
    <property type="entry name" value="HN"/>
    <property type="match status" value="1"/>
</dbReference>
<dbReference type="FunFam" id="2.120.10.10:FF:000004">
    <property type="entry name" value="Hemagglutinin-neuraminidase"/>
    <property type="match status" value="1"/>
</dbReference>
<dbReference type="Gene3D" id="2.120.10.10">
    <property type="match status" value="1"/>
</dbReference>
<dbReference type="InterPro" id="IPR016285">
    <property type="entry name" value="Hemagglutn-neuramid"/>
</dbReference>
<dbReference type="InterPro" id="IPR000665">
    <property type="entry name" value="Hemagglutn/HN"/>
</dbReference>
<dbReference type="InterPro" id="IPR036278">
    <property type="entry name" value="Sialidase_sf"/>
</dbReference>
<dbReference type="Pfam" id="PF00423">
    <property type="entry name" value="HN"/>
    <property type="match status" value="1"/>
</dbReference>
<dbReference type="PIRSF" id="PIRSF001072">
    <property type="entry name" value="Hemagglut-neuramid_paramyxoV"/>
    <property type="match status" value="1"/>
</dbReference>
<dbReference type="SUPFAM" id="SSF50939">
    <property type="entry name" value="Sialidases"/>
    <property type="match status" value="1"/>
</dbReference>
<organism>
    <name type="scientific">Newcastle disease virus (strain Queensland/66)</name>
    <name type="common">NDV</name>
    <dbReference type="NCBI Taxonomy" id="11186"/>
    <lineage>
        <taxon>Viruses</taxon>
        <taxon>Riboviria</taxon>
        <taxon>Orthornavirae</taxon>
        <taxon>Negarnaviricota</taxon>
        <taxon>Haploviricotina</taxon>
        <taxon>Monjiviricetes</taxon>
        <taxon>Mononegavirales</taxon>
        <taxon>Paramyxoviridae</taxon>
        <taxon>Avulavirinae</taxon>
        <taxon>Orthoavulavirus</taxon>
        <taxon>Orthoavulavirus javaense</taxon>
        <taxon>Avian paramyxovirus 1</taxon>
    </lineage>
</organism>
<name>HN_NDVQ</name>
<organismHost>
    <name type="scientific">Gallus gallus</name>
    <name type="common">Chicken</name>
    <dbReference type="NCBI Taxonomy" id="9031"/>
</organismHost>
<comment type="function">
    <text evidence="2">Mediates the viral entry into the host cell together with fusion/F protein. Attaches the virus to sialic acid-containing cell receptors and thereby initiates infection. Binding of HN protein to the receptor induces a conformational change that allows the F protein to trigger virion/cell membranes fusion.</text>
</comment>
<comment type="function">
    <text evidence="2">Neuraminidase activity ensures the efficient spread of the virus by dissociating the mature virions from the neuraminic acid containing glycoproteins.</text>
</comment>
<comment type="catalytic activity">
    <reaction evidence="2">
        <text>Hydrolysis of alpha-(2-&gt;3)-, alpha-(2-&gt;6)-, alpha-(2-&gt;8)- glycosidic linkages of terminal sialic acid residues in oligosaccharides, glycoproteins, glycolipids, colominic acid and synthetic substrates.</text>
        <dbReference type="EC" id="3.2.1.18"/>
    </reaction>
</comment>
<comment type="subunit">
    <text evidence="1 2 3">Homotetramer; composed of disulfide-linked homodimers (By similarity). Interacts with F protein trimer (By similarity). Interacts with host CG-1B; this interaction inhibits viral adsorption and replication rather than internalization (By similarity).</text>
</comment>
<comment type="subcellular location">
    <subcellularLocation>
        <location evidence="2">Virion membrane</location>
        <topology evidence="2">Single-pass type II membrane protein</topology>
    </subcellularLocation>
    <subcellularLocation>
        <location evidence="2">Host cell membrane</location>
        <topology evidence="2">Single-pass type II membrane protein</topology>
    </subcellularLocation>
</comment>
<comment type="domain">
    <text evidence="3">The C-terminus (head domain) is involved in binding the cellular receptor.</text>
</comment>
<comment type="similarity">
    <text evidence="5">Belongs to the paramyxoviruses hemagglutinin-neuraminidase family.</text>
</comment>
<keyword id="KW-1015">Disulfide bond</keyword>
<keyword id="KW-0325">Glycoprotein</keyword>
<keyword id="KW-0348">Hemagglutinin</keyword>
<keyword id="KW-1032">Host cell membrane</keyword>
<keyword id="KW-1043">Host membrane</keyword>
<keyword id="KW-0945">Host-virus interaction</keyword>
<keyword id="KW-0378">Hydrolase</keyword>
<keyword id="KW-0472">Membrane</keyword>
<keyword id="KW-0735">Signal-anchor</keyword>
<keyword id="KW-0812">Transmembrane</keyword>
<keyword id="KW-1133">Transmembrane helix</keyword>
<keyword id="KW-1161">Viral attachment to host cell</keyword>
<keyword id="KW-0261">Viral envelope protein</keyword>
<keyword id="KW-0946">Virion</keyword>
<keyword id="KW-1160">Virus entry into host cell</keyword>
<reference key="1">
    <citation type="journal article" date="1988" name="J. Biol. Chem.">
        <title>Characterization of the sites of proteolytic activation of Newcastle disease virus membrane glycoprotein precursors.</title>
        <authorList>
            <person name="Gorman J.J."/>
            <person name="Nestorowicz A."/>
            <person name="Mitchell S.J."/>
            <person name="Corino G.L."/>
            <person name="Selleck P.W."/>
        </authorList>
    </citation>
    <scope>NUCLEOTIDE SEQUENCE [GENOMIC RNA]</scope>
</reference>
<reference key="2">
    <citation type="journal article" date="1989" name="Virology">
        <title>Newcastle disease virus evolution. I. Multiple lineages defined by sequence variability of the hemagglutinin-neuraminidase gene.</title>
        <authorList>
            <person name="Sakaguchi T."/>
            <person name="Toyoda T."/>
            <person name="Gotoh B."/>
            <person name="Inocencio N.M."/>
            <person name="Kuma K."/>
            <person name="Miyata T."/>
            <person name="Nagai Y."/>
        </authorList>
    </citation>
    <scope>NUCLEOTIDE SEQUENCE [GENOMIC RNA]</scope>
</reference>
<protein>
    <recommendedName>
        <fullName>Hemagglutinin-neuraminidase</fullName>
        <ecNumber evidence="3">3.2.1.18</ecNumber>
    </recommendedName>
</protein>
<accession>P13850</accession>
<evidence type="ECO:0000250" key="1">
    <source>
        <dbReference type="UniProtKB" id="P04853"/>
    </source>
</evidence>
<evidence type="ECO:0000250" key="2">
    <source>
        <dbReference type="UniProtKB" id="Q91UL0"/>
    </source>
</evidence>
<evidence type="ECO:0000250" key="3">
    <source>
        <dbReference type="UniProtKB" id="Q9WAF5"/>
    </source>
</evidence>
<evidence type="ECO:0000255" key="4"/>
<evidence type="ECO:0000305" key="5"/>
<gene>
    <name type="primary">HN</name>
</gene>
<proteinExistence type="inferred from homology"/>
<sequence>MDRAVSQVALENDEREAKNTWRLVFRIAILLSTVVTLAISAAALAYSMEASTPSDLVGIPTAISRAEEKITSALGSNQDVVDRIYKQVALESPLALLNTESTIMNAITSLSYRINGAANSSGCGAPIHDPDYIGGIGKELIVDDASDVTSYYPSAFQEHLNFIPAPTTGSGCTRIPSFDMSATHYCYTHNVILSGCRDHSHSHQYLALGVLRTSATGRVFFSTLRSINLDDTQNRKSCSVSATPLGCDMLCSKVTETEEEDYNSAIPTSMVHGRLGFDGQYHEKDLDVTTLFEDWVANYPGVGGGSFIDNRVWFPVYGGLKPNSPSDTAQEGKYVIYKRYNDTCPDEQDYQIQMAKSSYKPGRFGGKRVQQAILSIKVSTSLGEDPVLTVPPNTVTLMGAEGRVLTVGTSHFLYQRGSSYFSPALLYPMIVSNKTATLHSPYTFNAFTRPGSVPCQASARCPNSCVTGVYTDPYPLVFYRNHTLRGVFGTMLDDKQARLNPVSAVFDSISRSRITRVSSSSTKAAYTTSTCFKVVKTNKTYCLSIAEISNTLFGEFRIVPLLVEILKDDGVREARSSRLSQLREGWKDDIVSPIFCDAKNQTEYRRELESYAASWP</sequence>